<protein>
    <recommendedName>
        <fullName evidence="1">DNA repair protein RecO</fullName>
    </recommendedName>
    <alternativeName>
        <fullName evidence="1">Recombination protein O</fullName>
    </alternativeName>
</protein>
<sequence length="275" mass="30513">MTDEADADPQPFAAPPATGAPAADKPARKPRRAAPRTSEFRIAEQPAFVLHSYPYRETSLVIDVLTRDHGRIALVAKGAKRPHSALRGVLQTFQPLSLSWSGKSELRTLTGAEWVGGMLPLAGDALLCGFYANELLVKFCAREDPHPPLFQHYLVTLTRLAHGEPPVQVLRSFERVLLRETGYAMTLKRTVARRAVEPDKLYVFDPQRGVRDAGSDAPSHWPVIAGQTLLDMEEDDYHRAQTVAQSKTLMRFLLNTYLGGTPLATRQILIDLQNL</sequence>
<keyword id="KW-0227">DNA damage</keyword>
<keyword id="KW-0233">DNA recombination</keyword>
<keyword id="KW-0234">DNA repair</keyword>
<name>RECO_BURP1</name>
<organism>
    <name type="scientific">Burkholderia pseudomallei (strain 1710b)</name>
    <dbReference type="NCBI Taxonomy" id="320372"/>
    <lineage>
        <taxon>Bacteria</taxon>
        <taxon>Pseudomonadati</taxon>
        <taxon>Pseudomonadota</taxon>
        <taxon>Betaproteobacteria</taxon>
        <taxon>Burkholderiales</taxon>
        <taxon>Burkholderiaceae</taxon>
        <taxon>Burkholderia</taxon>
        <taxon>pseudomallei group</taxon>
    </lineage>
</organism>
<gene>
    <name evidence="1" type="primary">recO</name>
    <name type="ordered locus">BURPS1710b_2893</name>
</gene>
<comment type="function">
    <text evidence="1">Involved in DNA repair and RecF pathway recombination.</text>
</comment>
<comment type="similarity">
    <text evidence="1">Belongs to the RecO family.</text>
</comment>
<comment type="sequence caution" evidence="3">
    <conflict type="erroneous initiation">
        <sequence resource="EMBL-CDS" id="ABA49262"/>
    </conflict>
</comment>
<reference key="1">
    <citation type="journal article" date="2010" name="Genome Biol. Evol.">
        <title>Continuing evolution of Burkholderia mallei through genome reduction and large-scale rearrangements.</title>
        <authorList>
            <person name="Losada L."/>
            <person name="Ronning C.M."/>
            <person name="DeShazer D."/>
            <person name="Woods D."/>
            <person name="Fedorova N."/>
            <person name="Kim H.S."/>
            <person name="Shabalina S.A."/>
            <person name="Pearson T.R."/>
            <person name="Brinkac L."/>
            <person name="Tan P."/>
            <person name="Nandi T."/>
            <person name="Crabtree J."/>
            <person name="Badger J."/>
            <person name="Beckstrom-Sternberg S."/>
            <person name="Saqib M."/>
            <person name="Schutzer S.E."/>
            <person name="Keim P."/>
            <person name="Nierman W.C."/>
        </authorList>
    </citation>
    <scope>NUCLEOTIDE SEQUENCE [LARGE SCALE GENOMIC DNA]</scope>
    <source>
        <strain>1710b</strain>
    </source>
</reference>
<accession>Q3JQ79</accession>
<evidence type="ECO:0000255" key="1">
    <source>
        <dbReference type="HAMAP-Rule" id="MF_00201"/>
    </source>
</evidence>
<evidence type="ECO:0000256" key="2">
    <source>
        <dbReference type="SAM" id="MobiDB-lite"/>
    </source>
</evidence>
<evidence type="ECO:0000305" key="3"/>
<dbReference type="EMBL" id="CP000124">
    <property type="protein sequence ID" value="ABA49262.1"/>
    <property type="status" value="ALT_INIT"/>
    <property type="molecule type" value="Genomic_DNA"/>
</dbReference>
<dbReference type="SMR" id="Q3JQ79"/>
<dbReference type="EnsemblBacteria" id="ABA49262">
    <property type="protein sequence ID" value="ABA49262"/>
    <property type="gene ID" value="BURPS1710b_2893"/>
</dbReference>
<dbReference type="KEGG" id="bpm:BURPS1710b_2893"/>
<dbReference type="HOGENOM" id="CLU_066645_0_0_4"/>
<dbReference type="Proteomes" id="UP000002700">
    <property type="component" value="Chromosome I"/>
</dbReference>
<dbReference type="GO" id="GO:0043590">
    <property type="term" value="C:bacterial nucleoid"/>
    <property type="evidence" value="ECO:0007669"/>
    <property type="project" value="TreeGrafter"/>
</dbReference>
<dbReference type="GO" id="GO:0006310">
    <property type="term" value="P:DNA recombination"/>
    <property type="evidence" value="ECO:0007669"/>
    <property type="project" value="UniProtKB-UniRule"/>
</dbReference>
<dbReference type="GO" id="GO:0006302">
    <property type="term" value="P:double-strand break repair"/>
    <property type="evidence" value="ECO:0007669"/>
    <property type="project" value="TreeGrafter"/>
</dbReference>
<dbReference type="Gene3D" id="2.40.50.140">
    <property type="entry name" value="Nucleic acid-binding proteins"/>
    <property type="match status" value="1"/>
</dbReference>
<dbReference type="Gene3D" id="1.20.1440.120">
    <property type="entry name" value="Recombination protein O, C-terminal domain"/>
    <property type="match status" value="1"/>
</dbReference>
<dbReference type="HAMAP" id="MF_00201">
    <property type="entry name" value="RecO"/>
    <property type="match status" value="1"/>
</dbReference>
<dbReference type="InterPro" id="IPR037278">
    <property type="entry name" value="ARFGAP/RecO"/>
</dbReference>
<dbReference type="InterPro" id="IPR022572">
    <property type="entry name" value="DNA_rep/recomb_RecO_N"/>
</dbReference>
<dbReference type="InterPro" id="IPR012340">
    <property type="entry name" value="NA-bd_OB-fold"/>
</dbReference>
<dbReference type="InterPro" id="IPR003717">
    <property type="entry name" value="RecO"/>
</dbReference>
<dbReference type="InterPro" id="IPR042242">
    <property type="entry name" value="RecO_C"/>
</dbReference>
<dbReference type="NCBIfam" id="TIGR00613">
    <property type="entry name" value="reco"/>
    <property type="match status" value="1"/>
</dbReference>
<dbReference type="PANTHER" id="PTHR33991">
    <property type="entry name" value="DNA REPAIR PROTEIN RECO"/>
    <property type="match status" value="1"/>
</dbReference>
<dbReference type="PANTHER" id="PTHR33991:SF1">
    <property type="entry name" value="DNA REPAIR PROTEIN RECO"/>
    <property type="match status" value="1"/>
</dbReference>
<dbReference type="Pfam" id="PF02565">
    <property type="entry name" value="RecO_C"/>
    <property type="match status" value="1"/>
</dbReference>
<dbReference type="Pfam" id="PF11967">
    <property type="entry name" value="RecO_N"/>
    <property type="match status" value="1"/>
</dbReference>
<dbReference type="SUPFAM" id="SSF57863">
    <property type="entry name" value="ArfGap/RecO-like zinc finger"/>
    <property type="match status" value="1"/>
</dbReference>
<dbReference type="SUPFAM" id="SSF50249">
    <property type="entry name" value="Nucleic acid-binding proteins"/>
    <property type="match status" value="1"/>
</dbReference>
<feature type="chain" id="PRO_0000264807" description="DNA repair protein RecO">
    <location>
        <begin position="1"/>
        <end position="275"/>
    </location>
</feature>
<feature type="region of interest" description="Disordered" evidence="2">
    <location>
        <begin position="1"/>
        <end position="38"/>
    </location>
</feature>
<feature type="compositionally biased region" description="Low complexity" evidence="2">
    <location>
        <begin position="8"/>
        <end position="24"/>
    </location>
</feature>
<proteinExistence type="inferred from homology"/>